<accession>A6W2E0</accession>
<proteinExistence type="inferred from homology"/>
<feature type="chain" id="PRO_1000116426" description="SsrA-binding protein">
    <location>
        <begin position="1"/>
        <end position="159"/>
    </location>
</feature>
<feature type="region of interest" description="Disordered" evidence="2">
    <location>
        <begin position="134"/>
        <end position="159"/>
    </location>
</feature>
<keyword id="KW-0963">Cytoplasm</keyword>
<keyword id="KW-0694">RNA-binding</keyword>
<evidence type="ECO:0000255" key="1">
    <source>
        <dbReference type="HAMAP-Rule" id="MF_00023"/>
    </source>
</evidence>
<evidence type="ECO:0000256" key="2">
    <source>
        <dbReference type="SAM" id="MobiDB-lite"/>
    </source>
</evidence>
<name>SSRP_MARMS</name>
<protein>
    <recommendedName>
        <fullName evidence="1">SsrA-binding protein</fullName>
    </recommendedName>
    <alternativeName>
        <fullName evidence="1">Small protein B</fullName>
    </alternativeName>
</protein>
<organism>
    <name type="scientific">Marinomonas sp. (strain MWYL1)</name>
    <dbReference type="NCBI Taxonomy" id="400668"/>
    <lineage>
        <taxon>Bacteria</taxon>
        <taxon>Pseudomonadati</taxon>
        <taxon>Pseudomonadota</taxon>
        <taxon>Gammaproteobacteria</taxon>
        <taxon>Oceanospirillales</taxon>
        <taxon>Oceanospirillaceae</taxon>
        <taxon>Marinomonas</taxon>
    </lineage>
</organism>
<reference key="1">
    <citation type="submission" date="2007-06" db="EMBL/GenBank/DDBJ databases">
        <title>Complete sequence of Marinomonas sp. MWYL1.</title>
        <authorList>
            <consortium name="US DOE Joint Genome Institute"/>
            <person name="Copeland A."/>
            <person name="Lucas S."/>
            <person name="Lapidus A."/>
            <person name="Barry K."/>
            <person name="Glavina del Rio T."/>
            <person name="Dalin E."/>
            <person name="Tice H."/>
            <person name="Pitluck S."/>
            <person name="Kiss H."/>
            <person name="Brettin T."/>
            <person name="Bruce D."/>
            <person name="Detter J.C."/>
            <person name="Han C."/>
            <person name="Schmutz J."/>
            <person name="Larimer F."/>
            <person name="Land M."/>
            <person name="Hauser L."/>
            <person name="Kyrpides N."/>
            <person name="Kim E."/>
            <person name="Johnston A.W.B."/>
            <person name="Todd J.D."/>
            <person name="Rogers R."/>
            <person name="Wexler M."/>
            <person name="Bond P.L."/>
            <person name="Li Y."/>
            <person name="Richardson P."/>
        </authorList>
    </citation>
    <scope>NUCLEOTIDE SEQUENCE [LARGE SCALE GENOMIC DNA]</scope>
    <source>
        <strain>MWYL1</strain>
    </source>
</reference>
<dbReference type="EMBL" id="CP000749">
    <property type="protein sequence ID" value="ABR72869.1"/>
    <property type="molecule type" value="Genomic_DNA"/>
</dbReference>
<dbReference type="SMR" id="A6W2E0"/>
<dbReference type="STRING" id="400668.Mmwyl1_3972"/>
<dbReference type="KEGG" id="mmw:Mmwyl1_3972"/>
<dbReference type="eggNOG" id="COG0691">
    <property type="taxonomic scope" value="Bacteria"/>
</dbReference>
<dbReference type="HOGENOM" id="CLU_108953_3_0_6"/>
<dbReference type="OrthoDB" id="9805462at2"/>
<dbReference type="GO" id="GO:0005829">
    <property type="term" value="C:cytosol"/>
    <property type="evidence" value="ECO:0007669"/>
    <property type="project" value="TreeGrafter"/>
</dbReference>
<dbReference type="GO" id="GO:0003723">
    <property type="term" value="F:RNA binding"/>
    <property type="evidence" value="ECO:0007669"/>
    <property type="project" value="UniProtKB-UniRule"/>
</dbReference>
<dbReference type="GO" id="GO:0070929">
    <property type="term" value="P:trans-translation"/>
    <property type="evidence" value="ECO:0007669"/>
    <property type="project" value="UniProtKB-UniRule"/>
</dbReference>
<dbReference type="CDD" id="cd09294">
    <property type="entry name" value="SmpB"/>
    <property type="match status" value="1"/>
</dbReference>
<dbReference type="Gene3D" id="2.40.280.10">
    <property type="match status" value="1"/>
</dbReference>
<dbReference type="HAMAP" id="MF_00023">
    <property type="entry name" value="SmpB"/>
    <property type="match status" value="1"/>
</dbReference>
<dbReference type="InterPro" id="IPR023620">
    <property type="entry name" value="SmpB"/>
</dbReference>
<dbReference type="InterPro" id="IPR000037">
    <property type="entry name" value="SsrA-bd_prot"/>
</dbReference>
<dbReference type="InterPro" id="IPR020081">
    <property type="entry name" value="SsrA-bd_prot_CS"/>
</dbReference>
<dbReference type="NCBIfam" id="NF003843">
    <property type="entry name" value="PRK05422.1"/>
    <property type="match status" value="1"/>
</dbReference>
<dbReference type="NCBIfam" id="TIGR00086">
    <property type="entry name" value="smpB"/>
    <property type="match status" value="1"/>
</dbReference>
<dbReference type="PANTHER" id="PTHR30308:SF2">
    <property type="entry name" value="SSRA-BINDING PROTEIN"/>
    <property type="match status" value="1"/>
</dbReference>
<dbReference type="PANTHER" id="PTHR30308">
    <property type="entry name" value="TMRNA-BINDING COMPONENT OF TRANS-TRANSLATION TAGGING COMPLEX"/>
    <property type="match status" value="1"/>
</dbReference>
<dbReference type="Pfam" id="PF01668">
    <property type="entry name" value="SmpB"/>
    <property type="match status" value="1"/>
</dbReference>
<dbReference type="SUPFAM" id="SSF74982">
    <property type="entry name" value="Small protein B (SmpB)"/>
    <property type="match status" value="1"/>
</dbReference>
<dbReference type="PROSITE" id="PS01317">
    <property type="entry name" value="SSRP"/>
    <property type="match status" value="1"/>
</dbReference>
<gene>
    <name evidence="1" type="primary">smpB</name>
    <name type="ordered locus">Mmwyl1_3972</name>
</gene>
<comment type="function">
    <text evidence="1">Required for rescue of stalled ribosomes mediated by trans-translation. Binds to transfer-messenger RNA (tmRNA), required for stable association of tmRNA with ribosomes. tmRNA and SmpB together mimic tRNA shape, replacing the anticodon stem-loop with SmpB. tmRNA is encoded by the ssrA gene; the 2 termini fold to resemble tRNA(Ala) and it encodes a 'tag peptide', a short internal open reading frame. During trans-translation Ala-aminoacylated tmRNA acts like a tRNA, entering the A-site of stalled ribosomes, displacing the stalled mRNA. The ribosome then switches to translate the ORF on the tmRNA; the nascent peptide is terminated with the 'tag peptide' encoded by the tmRNA and targeted for degradation. The ribosome is freed to recommence translation, which seems to be the essential function of trans-translation.</text>
</comment>
<comment type="subcellular location">
    <subcellularLocation>
        <location evidence="1">Cytoplasm</location>
    </subcellularLocation>
    <text evidence="1">The tmRNA-SmpB complex associates with stalled 70S ribosomes.</text>
</comment>
<comment type="similarity">
    <text evidence="1">Belongs to the SmpB family.</text>
</comment>
<sequence length="159" mass="18312">MSKVKKKSTSTGTIALNKRAKYDYFVDQKFEAGLVLSGWEVKSLREGKAQLVDAFVIIHQNEAWLVGARITPLLSASTHVVCEPMRQRKLLLNRKELERIIQVTEQKGKTCAAMALYWKGNKIKCEVALVTGKKEHDKRDTERDRDWSRDKERLMKHNA</sequence>